<evidence type="ECO:0000255" key="1">
    <source>
        <dbReference type="HAMAP-Rule" id="MF_00252"/>
    </source>
</evidence>
<name>SYK_HERAR</name>
<sequence>MTTHNDDAAASLPIDENKIIAERRAKLSALREQGIAFPNDFRPQHKAADLQEKYGSKTREELEAEPVTVVLAGRMMLKREAGKKAAFATLQDASGSKADGRIQIYVTLNLTGEAAMAALHHYDLGDILGVSGTLFKTKTDELTIKVSELRLITKSLRPLPDKFHGLADQETKYRQRYVDLIMNEDTRRTFKARTAAISSIRRFMERNDFMEVETPMLHTIPGGAAAKPFTTHHNALDMEMFLRIAPELYLKRLVVGGFDRVFEINRNFRNEGVSIRHNPEFTMMEFYAAYTDYKWLMDFTEAVIRQAAIDAHGTATLTYGGRELDLAKPFHRLTIVGAINKFAPQYTHEQLHDAEYIKAELKKFGVKPHAHSGLGALQLALFEETAEAQLWEPTYIIDYPVEVSPLARASDTVAGITERFELFMVGREIANGFSELNDAEDQAARFQAQVAAKDAGDEEAMYYDADYIRALEYGMPPTGGCGIGIDRLMMIITDSPNIRDVLLFPHLRRED</sequence>
<dbReference type="EC" id="6.1.1.6" evidence="1"/>
<dbReference type="EMBL" id="CU207211">
    <property type="protein sequence ID" value="CAL62365.1"/>
    <property type="molecule type" value="Genomic_DNA"/>
</dbReference>
<dbReference type="SMR" id="A4G778"/>
<dbReference type="STRING" id="204773.HEAR2230"/>
<dbReference type="KEGG" id="har:HEAR2230"/>
<dbReference type="eggNOG" id="COG1190">
    <property type="taxonomic scope" value="Bacteria"/>
</dbReference>
<dbReference type="HOGENOM" id="CLU_008255_6_0_4"/>
<dbReference type="OrthoDB" id="9801152at2"/>
<dbReference type="Proteomes" id="UP000006697">
    <property type="component" value="Chromosome"/>
</dbReference>
<dbReference type="GO" id="GO:0005829">
    <property type="term" value="C:cytosol"/>
    <property type="evidence" value="ECO:0007669"/>
    <property type="project" value="TreeGrafter"/>
</dbReference>
<dbReference type="GO" id="GO:0005524">
    <property type="term" value="F:ATP binding"/>
    <property type="evidence" value="ECO:0007669"/>
    <property type="project" value="UniProtKB-UniRule"/>
</dbReference>
<dbReference type="GO" id="GO:0004824">
    <property type="term" value="F:lysine-tRNA ligase activity"/>
    <property type="evidence" value="ECO:0007669"/>
    <property type="project" value="UniProtKB-UniRule"/>
</dbReference>
<dbReference type="GO" id="GO:0000287">
    <property type="term" value="F:magnesium ion binding"/>
    <property type="evidence" value="ECO:0007669"/>
    <property type="project" value="UniProtKB-UniRule"/>
</dbReference>
<dbReference type="GO" id="GO:0000049">
    <property type="term" value="F:tRNA binding"/>
    <property type="evidence" value="ECO:0007669"/>
    <property type="project" value="TreeGrafter"/>
</dbReference>
<dbReference type="GO" id="GO:0006430">
    <property type="term" value="P:lysyl-tRNA aminoacylation"/>
    <property type="evidence" value="ECO:0007669"/>
    <property type="project" value="UniProtKB-UniRule"/>
</dbReference>
<dbReference type="CDD" id="cd00775">
    <property type="entry name" value="LysRS_core"/>
    <property type="match status" value="1"/>
</dbReference>
<dbReference type="CDD" id="cd04322">
    <property type="entry name" value="LysRS_N"/>
    <property type="match status" value="1"/>
</dbReference>
<dbReference type="FunFam" id="2.40.50.140:FF:000024">
    <property type="entry name" value="Lysine--tRNA ligase"/>
    <property type="match status" value="1"/>
</dbReference>
<dbReference type="FunFam" id="3.30.930.10:FF:000001">
    <property type="entry name" value="Lysine--tRNA ligase"/>
    <property type="match status" value="1"/>
</dbReference>
<dbReference type="Gene3D" id="3.30.930.10">
    <property type="entry name" value="Bira Bifunctional Protein, Domain 2"/>
    <property type="match status" value="1"/>
</dbReference>
<dbReference type="Gene3D" id="2.40.50.140">
    <property type="entry name" value="Nucleic acid-binding proteins"/>
    <property type="match status" value="1"/>
</dbReference>
<dbReference type="HAMAP" id="MF_00252">
    <property type="entry name" value="Lys_tRNA_synth_class2"/>
    <property type="match status" value="1"/>
</dbReference>
<dbReference type="InterPro" id="IPR004364">
    <property type="entry name" value="Aa-tRNA-synt_II"/>
</dbReference>
<dbReference type="InterPro" id="IPR006195">
    <property type="entry name" value="aa-tRNA-synth_II"/>
</dbReference>
<dbReference type="InterPro" id="IPR045864">
    <property type="entry name" value="aa-tRNA-synth_II/BPL/LPL"/>
</dbReference>
<dbReference type="InterPro" id="IPR002313">
    <property type="entry name" value="Lys-tRNA-ligase_II"/>
</dbReference>
<dbReference type="InterPro" id="IPR044136">
    <property type="entry name" value="Lys-tRNA-ligase_II_N"/>
</dbReference>
<dbReference type="InterPro" id="IPR018149">
    <property type="entry name" value="Lys-tRNA-synth_II_C"/>
</dbReference>
<dbReference type="InterPro" id="IPR012340">
    <property type="entry name" value="NA-bd_OB-fold"/>
</dbReference>
<dbReference type="InterPro" id="IPR004365">
    <property type="entry name" value="NA-bd_OB_tRNA"/>
</dbReference>
<dbReference type="NCBIfam" id="TIGR00499">
    <property type="entry name" value="lysS_bact"/>
    <property type="match status" value="1"/>
</dbReference>
<dbReference type="NCBIfam" id="NF001756">
    <property type="entry name" value="PRK00484.1"/>
    <property type="match status" value="1"/>
</dbReference>
<dbReference type="PANTHER" id="PTHR42918:SF15">
    <property type="entry name" value="LYSINE--TRNA LIGASE, CHLOROPLASTIC_MITOCHONDRIAL"/>
    <property type="match status" value="1"/>
</dbReference>
<dbReference type="PANTHER" id="PTHR42918">
    <property type="entry name" value="LYSYL-TRNA SYNTHETASE"/>
    <property type="match status" value="1"/>
</dbReference>
<dbReference type="Pfam" id="PF00152">
    <property type="entry name" value="tRNA-synt_2"/>
    <property type="match status" value="1"/>
</dbReference>
<dbReference type="Pfam" id="PF01336">
    <property type="entry name" value="tRNA_anti-codon"/>
    <property type="match status" value="1"/>
</dbReference>
<dbReference type="PRINTS" id="PR00982">
    <property type="entry name" value="TRNASYNTHLYS"/>
</dbReference>
<dbReference type="SUPFAM" id="SSF55681">
    <property type="entry name" value="Class II aaRS and biotin synthetases"/>
    <property type="match status" value="1"/>
</dbReference>
<dbReference type="SUPFAM" id="SSF50249">
    <property type="entry name" value="Nucleic acid-binding proteins"/>
    <property type="match status" value="1"/>
</dbReference>
<dbReference type="PROSITE" id="PS50862">
    <property type="entry name" value="AA_TRNA_LIGASE_II"/>
    <property type="match status" value="1"/>
</dbReference>
<accession>A4G778</accession>
<comment type="catalytic activity">
    <reaction evidence="1">
        <text>tRNA(Lys) + L-lysine + ATP = L-lysyl-tRNA(Lys) + AMP + diphosphate</text>
        <dbReference type="Rhea" id="RHEA:20792"/>
        <dbReference type="Rhea" id="RHEA-COMP:9696"/>
        <dbReference type="Rhea" id="RHEA-COMP:9697"/>
        <dbReference type="ChEBI" id="CHEBI:30616"/>
        <dbReference type="ChEBI" id="CHEBI:32551"/>
        <dbReference type="ChEBI" id="CHEBI:33019"/>
        <dbReference type="ChEBI" id="CHEBI:78442"/>
        <dbReference type="ChEBI" id="CHEBI:78529"/>
        <dbReference type="ChEBI" id="CHEBI:456215"/>
        <dbReference type="EC" id="6.1.1.6"/>
    </reaction>
</comment>
<comment type="cofactor">
    <cofactor evidence="1">
        <name>Mg(2+)</name>
        <dbReference type="ChEBI" id="CHEBI:18420"/>
    </cofactor>
    <text evidence="1">Binds 3 Mg(2+) ions per subunit.</text>
</comment>
<comment type="subunit">
    <text evidence="1">Homodimer.</text>
</comment>
<comment type="subcellular location">
    <subcellularLocation>
        <location evidence="1">Cytoplasm</location>
    </subcellularLocation>
</comment>
<comment type="similarity">
    <text evidence="1">Belongs to the class-II aminoacyl-tRNA synthetase family.</text>
</comment>
<proteinExistence type="inferred from homology"/>
<protein>
    <recommendedName>
        <fullName evidence="1">Lysine--tRNA ligase</fullName>
        <ecNumber evidence="1">6.1.1.6</ecNumber>
    </recommendedName>
    <alternativeName>
        <fullName evidence="1">Lysyl-tRNA synthetase</fullName>
        <shortName evidence="1">LysRS</shortName>
    </alternativeName>
</protein>
<feature type="chain" id="PRO_1000012878" description="Lysine--tRNA ligase">
    <location>
        <begin position="1"/>
        <end position="511"/>
    </location>
</feature>
<feature type="binding site" evidence="1">
    <location>
        <position position="421"/>
    </location>
    <ligand>
        <name>Mg(2+)</name>
        <dbReference type="ChEBI" id="CHEBI:18420"/>
        <label>1</label>
    </ligand>
</feature>
<feature type="binding site" evidence="1">
    <location>
        <position position="428"/>
    </location>
    <ligand>
        <name>Mg(2+)</name>
        <dbReference type="ChEBI" id="CHEBI:18420"/>
        <label>1</label>
    </ligand>
</feature>
<feature type="binding site" evidence="1">
    <location>
        <position position="428"/>
    </location>
    <ligand>
        <name>Mg(2+)</name>
        <dbReference type="ChEBI" id="CHEBI:18420"/>
        <label>2</label>
    </ligand>
</feature>
<gene>
    <name evidence="1" type="primary">lysS</name>
    <name type="ordered locus">HEAR2230</name>
</gene>
<keyword id="KW-0030">Aminoacyl-tRNA synthetase</keyword>
<keyword id="KW-0067">ATP-binding</keyword>
<keyword id="KW-0963">Cytoplasm</keyword>
<keyword id="KW-0436">Ligase</keyword>
<keyword id="KW-0460">Magnesium</keyword>
<keyword id="KW-0479">Metal-binding</keyword>
<keyword id="KW-0547">Nucleotide-binding</keyword>
<keyword id="KW-0648">Protein biosynthesis</keyword>
<keyword id="KW-1185">Reference proteome</keyword>
<organism>
    <name type="scientific">Herminiimonas arsenicoxydans</name>
    <dbReference type="NCBI Taxonomy" id="204773"/>
    <lineage>
        <taxon>Bacteria</taxon>
        <taxon>Pseudomonadati</taxon>
        <taxon>Pseudomonadota</taxon>
        <taxon>Betaproteobacteria</taxon>
        <taxon>Burkholderiales</taxon>
        <taxon>Oxalobacteraceae</taxon>
        <taxon>Herminiimonas</taxon>
    </lineage>
</organism>
<reference key="1">
    <citation type="journal article" date="2007" name="PLoS Genet.">
        <title>A tale of two oxidation states: bacterial colonization of arsenic-rich environments.</title>
        <authorList>
            <person name="Muller D."/>
            <person name="Medigue C."/>
            <person name="Koechler S."/>
            <person name="Barbe V."/>
            <person name="Barakat M."/>
            <person name="Talla E."/>
            <person name="Bonnefoy V."/>
            <person name="Krin E."/>
            <person name="Arsene-Ploetze F."/>
            <person name="Carapito C."/>
            <person name="Chandler M."/>
            <person name="Cournoyer B."/>
            <person name="Cruveiller S."/>
            <person name="Dossat C."/>
            <person name="Duval S."/>
            <person name="Heymann M."/>
            <person name="Leize E."/>
            <person name="Lieutaud A."/>
            <person name="Lievremont D."/>
            <person name="Makita Y."/>
            <person name="Mangenot S."/>
            <person name="Nitschke W."/>
            <person name="Ortet P."/>
            <person name="Perdrial N."/>
            <person name="Schoepp B."/>
            <person name="Siguier P."/>
            <person name="Simeonova D.D."/>
            <person name="Rouy Z."/>
            <person name="Segurens B."/>
            <person name="Turlin E."/>
            <person name="Vallenet D."/>
            <person name="van Dorsselaer A."/>
            <person name="Weiss S."/>
            <person name="Weissenbach J."/>
            <person name="Lett M.-C."/>
            <person name="Danchin A."/>
            <person name="Bertin P.N."/>
        </authorList>
    </citation>
    <scope>NUCLEOTIDE SEQUENCE [LARGE SCALE GENOMIC DNA]</scope>
    <source>
        <strain>ULPAs1</strain>
    </source>
</reference>